<accession>Q498R1</accession>
<accession>D3ZDG8</accession>
<reference key="1">
    <citation type="submission" date="2005-09" db="EMBL/GenBank/DDBJ databases">
        <authorList>
            <person name="Mural R.J."/>
            <person name="Adams M.D."/>
            <person name="Myers E.W."/>
            <person name="Smith H.O."/>
            <person name="Venter J.C."/>
        </authorList>
    </citation>
    <scope>NUCLEOTIDE SEQUENCE [LARGE SCALE GENOMIC DNA]</scope>
    <source>
        <strain>Brown Norway</strain>
    </source>
</reference>
<reference key="2">
    <citation type="journal article" date="2004" name="Genome Res.">
        <title>The status, quality, and expansion of the NIH full-length cDNA project: the Mammalian Gene Collection (MGC).</title>
        <authorList>
            <consortium name="The MGC Project Team"/>
        </authorList>
    </citation>
    <scope>NUCLEOTIDE SEQUENCE [LARGE SCALE MRNA] (ISOFORM 2)</scope>
    <source>
        <tissue>Thymus</tissue>
    </source>
</reference>
<dbReference type="EC" id="1.16.1.8" evidence="3"/>
<dbReference type="EMBL" id="CH474002">
    <property type="protein sequence ID" value="EDL87600.1"/>
    <property type="molecule type" value="Genomic_DNA"/>
</dbReference>
<dbReference type="EMBL" id="BC100107">
    <property type="protein sequence ID" value="AAI00108.1"/>
    <property type="molecule type" value="mRNA"/>
</dbReference>
<dbReference type="RefSeq" id="NP_001034092.1">
    <molecule id="Q498R1-2"/>
    <property type="nucleotide sequence ID" value="NM_001039003.1"/>
</dbReference>
<dbReference type="RefSeq" id="XP_006227875.1">
    <molecule id="Q498R1-1"/>
    <property type="nucleotide sequence ID" value="XM_006227813.5"/>
</dbReference>
<dbReference type="RefSeq" id="XP_063138780.1">
    <molecule id="Q498R1-1"/>
    <property type="nucleotide sequence ID" value="XM_063282710.1"/>
</dbReference>
<dbReference type="SMR" id="Q498R1"/>
<dbReference type="FunCoup" id="Q498R1">
    <property type="interactions" value="1146"/>
</dbReference>
<dbReference type="STRING" id="10116.ENSRNOP00000024041"/>
<dbReference type="PhosphoSitePlus" id="Q498R1"/>
<dbReference type="PaxDb" id="10116-ENSRNOP00000024041"/>
<dbReference type="Ensembl" id="ENSRNOT00000061790.4">
    <molecule id="Q498R1-2"/>
    <property type="protein sequence ID" value="ENSRNOP00000058505.2"/>
    <property type="gene ID" value="ENSRNOG00000017826.7"/>
</dbReference>
<dbReference type="Ensembl" id="ENSRNOT00000094903.1">
    <molecule id="Q498R1-1"/>
    <property type="protein sequence ID" value="ENSRNOP00000078665.1"/>
    <property type="gene ID" value="ENSRNOG00000017826.7"/>
</dbReference>
<dbReference type="GeneID" id="290947"/>
<dbReference type="KEGG" id="rno:290947"/>
<dbReference type="UCSC" id="RGD:1308671">
    <molecule id="Q498R1-1"/>
    <property type="organism name" value="rat"/>
</dbReference>
<dbReference type="AGR" id="RGD:1308671"/>
<dbReference type="CTD" id="4552"/>
<dbReference type="RGD" id="1308671">
    <property type="gene designation" value="Mtrr"/>
</dbReference>
<dbReference type="eggNOG" id="KOG1158">
    <property type="taxonomic scope" value="Eukaryota"/>
</dbReference>
<dbReference type="GeneTree" id="ENSGT00940000155822"/>
<dbReference type="HOGENOM" id="CLU_001570_17_0_1"/>
<dbReference type="InParanoid" id="Q498R1"/>
<dbReference type="OMA" id="LFFGHQR"/>
<dbReference type="OrthoDB" id="1856718at2759"/>
<dbReference type="TreeFam" id="TF105716"/>
<dbReference type="Reactome" id="R-RNO-156581">
    <property type="pathway name" value="Methylation"/>
</dbReference>
<dbReference type="Reactome" id="R-RNO-1614635">
    <property type="pathway name" value="Sulfur amino acid metabolism"/>
</dbReference>
<dbReference type="Reactome" id="R-RNO-9759218">
    <property type="pathway name" value="Cobalamin (Cbl) metabolism"/>
</dbReference>
<dbReference type="PRO" id="PR:Q498R1"/>
<dbReference type="Proteomes" id="UP000002494">
    <property type="component" value="Chromosome 1"/>
</dbReference>
<dbReference type="Proteomes" id="UP000234681">
    <property type="component" value="Chromosome 1"/>
</dbReference>
<dbReference type="Bgee" id="ENSRNOG00000017826">
    <property type="expression patterns" value="Expressed in quadriceps femoris and 19 other cell types or tissues"/>
</dbReference>
<dbReference type="GO" id="GO:0005829">
    <property type="term" value="C:cytosol"/>
    <property type="evidence" value="ECO:0000266"/>
    <property type="project" value="RGD"/>
</dbReference>
<dbReference type="GO" id="GO:0030586">
    <property type="term" value="F:[methionine synthase] reductase (NADPH) activity"/>
    <property type="evidence" value="ECO:0000266"/>
    <property type="project" value="RGD"/>
</dbReference>
<dbReference type="GO" id="GO:0071949">
    <property type="term" value="F:FAD binding"/>
    <property type="evidence" value="ECO:0000266"/>
    <property type="project" value="RGD"/>
</dbReference>
<dbReference type="GO" id="GO:0050660">
    <property type="term" value="F:flavin adenine dinucleotide binding"/>
    <property type="evidence" value="ECO:0000250"/>
    <property type="project" value="UniProtKB"/>
</dbReference>
<dbReference type="GO" id="GO:0010181">
    <property type="term" value="F:FMN binding"/>
    <property type="evidence" value="ECO:0000266"/>
    <property type="project" value="RGD"/>
</dbReference>
<dbReference type="GO" id="GO:0070402">
    <property type="term" value="F:NADPH binding"/>
    <property type="evidence" value="ECO:0000266"/>
    <property type="project" value="RGD"/>
</dbReference>
<dbReference type="GO" id="GO:0003958">
    <property type="term" value="F:NADPH-hemoprotein reductase activity"/>
    <property type="evidence" value="ECO:0000266"/>
    <property type="project" value="RGD"/>
</dbReference>
<dbReference type="GO" id="GO:0016723">
    <property type="term" value="F:oxidoreductase activity, acting on metal ions, NAD or NADP as acceptor"/>
    <property type="evidence" value="ECO:0000250"/>
    <property type="project" value="UniProtKB"/>
</dbReference>
<dbReference type="GO" id="GO:0009235">
    <property type="term" value="P:cobalamin metabolic process"/>
    <property type="evidence" value="ECO:0000266"/>
    <property type="project" value="RGD"/>
</dbReference>
<dbReference type="GO" id="GO:0046655">
    <property type="term" value="P:folic acid metabolic process"/>
    <property type="evidence" value="ECO:0000250"/>
    <property type="project" value="UniProtKB"/>
</dbReference>
<dbReference type="GO" id="GO:0043418">
    <property type="term" value="P:homocysteine catabolic process"/>
    <property type="evidence" value="ECO:0000266"/>
    <property type="project" value="RGD"/>
</dbReference>
<dbReference type="GO" id="GO:0050667">
    <property type="term" value="P:homocysteine metabolic process"/>
    <property type="evidence" value="ECO:0000266"/>
    <property type="project" value="RGD"/>
</dbReference>
<dbReference type="GO" id="GO:0009086">
    <property type="term" value="P:methionine biosynthetic process"/>
    <property type="evidence" value="ECO:0000318"/>
    <property type="project" value="GO_Central"/>
</dbReference>
<dbReference type="GO" id="GO:0033353">
    <property type="term" value="P:S-adenosylmethionine cycle"/>
    <property type="evidence" value="ECO:0000266"/>
    <property type="project" value="RGD"/>
</dbReference>
<dbReference type="CDD" id="cd06203">
    <property type="entry name" value="methionine_synthase_red"/>
    <property type="match status" value="1"/>
</dbReference>
<dbReference type="FunFam" id="1.20.990.10:FF:000007">
    <property type="entry name" value="Methionine synthase reductase"/>
    <property type="match status" value="1"/>
</dbReference>
<dbReference type="FunFam" id="3.40.50.360:FF:000025">
    <property type="entry name" value="methionine synthase reductase"/>
    <property type="match status" value="1"/>
</dbReference>
<dbReference type="FunFam" id="3.40.50.80:FF:000018">
    <property type="entry name" value="NADPH--cytochrome P450 reductase"/>
    <property type="match status" value="1"/>
</dbReference>
<dbReference type="Gene3D" id="3.40.50.360">
    <property type="match status" value="1"/>
</dbReference>
<dbReference type="Gene3D" id="1.20.990.10">
    <property type="entry name" value="NADPH-cytochrome p450 Reductase, Chain A, domain 3"/>
    <property type="match status" value="1"/>
</dbReference>
<dbReference type="Gene3D" id="3.40.50.80">
    <property type="entry name" value="Nucleotide-binding domain of ferredoxin-NADP reductase (FNR) module"/>
    <property type="match status" value="1"/>
</dbReference>
<dbReference type="Gene3D" id="2.40.30.10">
    <property type="entry name" value="Translation factors"/>
    <property type="match status" value="1"/>
</dbReference>
<dbReference type="InterPro" id="IPR003097">
    <property type="entry name" value="CysJ-like_FAD-binding"/>
</dbReference>
<dbReference type="InterPro" id="IPR017927">
    <property type="entry name" value="FAD-bd_FR_type"/>
</dbReference>
<dbReference type="InterPro" id="IPR001094">
    <property type="entry name" value="Flavdoxin-like"/>
</dbReference>
<dbReference type="InterPro" id="IPR008254">
    <property type="entry name" value="Flavodoxin/NO_synth"/>
</dbReference>
<dbReference type="InterPro" id="IPR001709">
    <property type="entry name" value="Flavoprot_Pyr_Nucl_cyt_Rdtase"/>
</dbReference>
<dbReference type="InterPro" id="IPR029039">
    <property type="entry name" value="Flavoprotein-like_sf"/>
</dbReference>
<dbReference type="InterPro" id="IPR039261">
    <property type="entry name" value="FNR_nucleotide-bd"/>
</dbReference>
<dbReference type="InterPro" id="IPR023173">
    <property type="entry name" value="NADPH_Cyt_P450_Rdtase_alpha"/>
</dbReference>
<dbReference type="InterPro" id="IPR001433">
    <property type="entry name" value="OxRdtase_FAD/NAD-bd"/>
</dbReference>
<dbReference type="InterPro" id="IPR017938">
    <property type="entry name" value="Riboflavin_synthase-like_b-brl"/>
</dbReference>
<dbReference type="PANTHER" id="PTHR19384:SF84">
    <property type="entry name" value="METHIONINE SYNTHASE REDUCTASE"/>
    <property type="match status" value="1"/>
</dbReference>
<dbReference type="PANTHER" id="PTHR19384">
    <property type="entry name" value="NITRIC OXIDE SYNTHASE-RELATED"/>
    <property type="match status" value="1"/>
</dbReference>
<dbReference type="Pfam" id="PF00667">
    <property type="entry name" value="FAD_binding_1"/>
    <property type="match status" value="1"/>
</dbReference>
<dbReference type="Pfam" id="PF00258">
    <property type="entry name" value="Flavodoxin_1"/>
    <property type="match status" value="1"/>
</dbReference>
<dbReference type="Pfam" id="PF00175">
    <property type="entry name" value="NAD_binding_1"/>
    <property type="match status" value="1"/>
</dbReference>
<dbReference type="PRINTS" id="PR00369">
    <property type="entry name" value="FLAVODOXIN"/>
</dbReference>
<dbReference type="PRINTS" id="PR00371">
    <property type="entry name" value="FPNCR"/>
</dbReference>
<dbReference type="SUPFAM" id="SSF52343">
    <property type="entry name" value="Ferredoxin reductase-like, C-terminal NADP-linked domain"/>
    <property type="match status" value="1"/>
</dbReference>
<dbReference type="SUPFAM" id="SSF52218">
    <property type="entry name" value="Flavoproteins"/>
    <property type="match status" value="1"/>
</dbReference>
<dbReference type="SUPFAM" id="SSF63380">
    <property type="entry name" value="Riboflavin synthase domain-like"/>
    <property type="match status" value="1"/>
</dbReference>
<dbReference type="PROSITE" id="PS51384">
    <property type="entry name" value="FAD_FR"/>
    <property type="match status" value="1"/>
</dbReference>
<dbReference type="PROSITE" id="PS50902">
    <property type="entry name" value="FLAVODOXIN_LIKE"/>
    <property type="match status" value="1"/>
</dbReference>
<sequence length="700" mass="78025">MRRFLLLYATQRGQAKAIAEEISEQALSHGFSADLHCVSESEKYDLKTETGPLVMVVSTTGTGDPPDTARKFVKEIHNKTLPTDFFAHLWYGLLGLGDSEYTYFCNGGKVIDKRLQELGAQHFYDTGHADDCVGLELVVEPWIDGLWPALTKHFKSLGGQEDMSDSDTLAQASDAPLSMAMKPELLHIQSQVELLSLEDVGKRDSELQEQNETNKNQPSRIEDFDSSLVNSVPPLSQSSLSIPAVSPEYLEVYLQESLGQDENQASVPPSVDPIFQVPISKAVELTTNDAIKTTLLLELDISKVEFSHQPGDSFNVICPNSGSEVEDLLQRLQLADKQAHRVILKIKMDTKKKGASLPQHVPEGSSLQFIFTWCLEIRAVPKKAFLRALSDYTSDATEKRRLQELCSKQGAADYNRFIRDASVCLLDLLLTFPSCQPPLNLLLEHLPKLQPRPYSCASSSLLHPDKLHFVFNIVELPSNTTAASLRKGVCTGWLATLVAPFLQPNTEVLTADHSDALAPEILISPRATNSFHLPDDLSAPIIMVGPGTGVAPFVGFLQHREKLQEQHPDGNFGAMWLFFGCRHKDRDYLFREELRHFLKTGVLTHLKVSFSRDAAPEEEEEAPAKYVQDNLQHHSQQVARTLLQENGYIYVCGDAKNMAKDVHDALVEIISKEAGVDKLEAMKTLATLKQEKRYLQDIWS</sequence>
<gene>
    <name type="primary">Mtrr</name>
</gene>
<organism>
    <name type="scientific">Rattus norvegicus</name>
    <name type="common">Rat</name>
    <dbReference type="NCBI Taxonomy" id="10116"/>
    <lineage>
        <taxon>Eukaryota</taxon>
        <taxon>Metazoa</taxon>
        <taxon>Chordata</taxon>
        <taxon>Craniata</taxon>
        <taxon>Vertebrata</taxon>
        <taxon>Euteleostomi</taxon>
        <taxon>Mammalia</taxon>
        <taxon>Eutheria</taxon>
        <taxon>Euarchontoglires</taxon>
        <taxon>Glires</taxon>
        <taxon>Rodentia</taxon>
        <taxon>Myomorpha</taxon>
        <taxon>Muroidea</taxon>
        <taxon>Muridae</taxon>
        <taxon>Murinae</taxon>
        <taxon>Rattus</taxon>
    </lineage>
</organism>
<protein>
    <recommendedName>
        <fullName>Methionine synthase reductase</fullName>
        <shortName>MSR</shortName>
        <ecNumber evidence="3">1.16.1.8</ecNumber>
    </recommendedName>
    <alternativeName>
        <fullName>Aquacobalamin reductase</fullName>
        <shortName>AqCbl reductase</shortName>
    </alternativeName>
</protein>
<keyword id="KW-0025">Alternative splicing</keyword>
<keyword id="KW-0028">Amino-acid biosynthesis</keyword>
<keyword id="KW-0963">Cytoplasm</keyword>
<keyword id="KW-0274">FAD</keyword>
<keyword id="KW-0285">Flavoprotein</keyword>
<keyword id="KW-0288">FMN</keyword>
<keyword id="KW-0486">Methionine biosynthesis</keyword>
<keyword id="KW-0521">NADP</keyword>
<keyword id="KW-0560">Oxidoreductase</keyword>
<keyword id="KW-0597">Phosphoprotein</keyword>
<keyword id="KW-1185">Reference proteome</keyword>
<keyword id="KW-0949">S-adenosyl-L-methionine</keyword>
<evidence type="ECO:0000250" key="1"/>
<evidence type="ECO:0000250" key="2">
    <source>
        <dbReference type="UniProtKB" id="Q8C1A3"/>
    </source>
</evidence>
<evidence type="ECO:0000250" key="3">
    <source>
        <dbReference type="UniProtKB" id="Q9UBK8"/>
    </source>
</evidence>
<evidence type="ECO:0000255" key="4">
    <source>
        <dbReference type="PROSITE-ProRule" id="PRU00088"/>
    </source>
</evidence>
<evidence type="ECO:0000255" key="5">
    <source>
        <dbReference type="PROSITE-ProRule" id="PRU00716"/>
    </source>
</evidence>
<evidence type="ECO:0000303" key="6">
    <source>
    </source>
</evidence>
<evidence type="ECO:0000305" key="7"/>
<name>MTRR_RAT</name>
<comment type="function">
    <text evidence="2 3">Key enzyme in methionine and folate homeostasis responsible for the reactivation of methionine synthase (MTR/MS) activity by catalyzing the reductive methylation of MTR-bound cob(II)alamin. Cobalamin (vitamin B12) forms a complex with MTR to serve as an intermediary in methyl transfer reactions that cycles between MTR-bound methylcob(III)alamin and MTR bound-cob(I)alamin forms, and occasional oxidative escape of the cob(I)alamin intermediate during the catalytic cycle leads to the inactive cob(II)alamin species. The processing of cobalamin in the cytosol occurs in a multiprotein complex composed of at least MMACHC, MMADHC, MTRR and MTR which may contribute to shuttle safely and efficiently cobalamin towards MTR in order to produce methionine (By similarity). Also necessary for the utilization of methyl groups from the folate cycle, thereby affecting transgenerational epigenetic inheritance (By similarity). Also acts as a molecular chaperone for methionine synthase by stabilizing apoMTR and incorporating methylcob(III)alamin into apoMTR to form the holoenzyme. Also serves as an aquacob(III)alamin reductase by reducing aquacob(III)alamin to cob(II)alamin; this reduction leads to stimulation of the conversion of apoMTR and aquacob(III)alamin to MTR holoenzyme (By similarity).</text>
</comment>
<comment type="catalytic activity">
    <reaction evidence="3">
        <text>2 methylcob(III)alamin-[methionine synthase] + 2 S-adenosyl-L-homocysteine + NADP(+) + H(+) = 2 cob(II)alamin-[methionine synthase] + 2 S-adenosyl-L-methionine + NADPH</text>
        <dbReference type="Rhea" id="RHEA:23908"/>
        <dbReference type="Rhea" id="RHEA-COMP:14714"/>
        <dbReference type="Rhea" id="RHEA-COMP:14715"/>
        <dbReference type="ChEBI" id="CHEBI:15378"/>
        <dbReference type="ChEBI" id="CHEBI:16304"/>
        <dbReference type="ChEBI" id="CHEBI:28115"/>
        <dbReference type="ChEBI" id="CHEBI:57783"/>
        <dbReference type="ChEBI" id="CHEBI:57856"/>
        <dbReference type="ChEBI" id="CHEBI:58349"/>
        <dbReference type="ChEBI" id="CHEBI:59789"/>
        <dbReference type="EC" id="1.16.1.8"/>
    </reaction>
    <physiologicalReaction direction="right-to-left" evidence="3">
        <dbReference type="Rhea" id="RHEA:23910"/>
    </physiologicalReaction>
</comment>
<comment type="catalytic activity">
    <reaction evidence="3">
        <text>2 cob(II)alamin + A + 2 H2O + 2 H(+) = 2 aquacob(III)alamin + AH2</text>
        <dbReference type="Rhea" id="RHEA:20752"/>
        <dbReference type="ChEBI" id="CHEBI:13193"/>
        <dbReference type="ChEBI" id="CHEBI:15377"/>
        <dbReference type="ChEBI" id="CHEBI:15378"/>
        <dbReference type="ChEBI" id="CHEBI:15852"/>
        <dbReference type="ChEBI" id="CHEBI:16304"/>
        <dbReference type="ChEBI" id="CHEBI:17499"/>
    </reaction>
    <physiologicalReaction direction="right-to-left" evidence="3">
        <dbReference type="Rhea" id="RHEA:20754"/>
    </physiologicalReaction>
</comment>
<comment type="cofactor">
    <cofactor evidence="3">
        <name>FAD</name>
        <dbReference type="ChEBI" id="CHEBI:57692"/>
    </cofactor>
</comment>
<comment type="cofactor">
    <cofactor evidence="3">
        <name>FMN</name>
        <dbReference type="ChEBI" id="CHEBI:58210"/>
    </cofactor>
</comment>
<comment type="subunit">
    <text evidence="3">Forms a multiprotein complex with MMACHC, MMADHC and MTR.</text>
</comment>
<comment type="subcellular location">
    <subcellularLocation>
        <location evidence="3">Cytoplasm</location>
    </subcellularLocation>
</comment>
<comment type="alternative products">
    <event type="alternative splicing"/>
    <isoform>
        <id>Q498R1-1</id>
        <name>1</name>
        <sequence type="displayed"/>
    </isoform>
    <isoform>
        <id>Q498R1-2</id>
        <name>2</name>
        <sequence type="described" ref="VSP_041294"/>
    </isoform>
</comment>
<comment type="miscellaneous">
    <text evidence="7">It is debated whether the reduction of free aquacob(II)alamin occurs spontaneously or is enzyme catalyzed.</text>
</comment>
<feature type="chain" id="PRO_0000409309" description="Methionine synthase reductase">
    <location>
        <begin position="1"/>
        <end position="700"/>
    </location>
</feature>
<feature type="domain" description="Flavodoxin-like" evidence="4">
    <location>
        <begin position="4"/>
        <end position="147"/>
    </location>
</feature>
<feature type="domain" description="FAD-binding FR-type" evidence="5">
    <location>
        <begin position="272"/>
        <end position="534"/>
    </location>
</feature>
<feature type="region of interest" description="Hinge" evidence="1">
    <location>
        <begin position="168"/>
        <end position="247"/>
    </location>
</feature>
<feature type="binding site" evidence="4">
    <location>
        <begin position="10"/>
        <end position="14"/>
    </location>
    <ligand>
        <name>FMN</name>
        <dbReference type="ChEBI" id="CHEBI:58210"/>
    </ligand>
</feature>
<feature type="binding site" evidence="4">
    <location>
        <begin position="93"/>
        <end position="124"/>
    </location>
    <ligand>
        <name>FMN</name>
        <dbReference type="ChEBI" id="CHEBI:58210"/>
    </ligand>
</feature>
<feature type="binding site" evidence="1">
    <location>
        <position position="292"/>
    </location>
    <ligand>
        <name>NADP(+)</name>
        <dbReference type="ChEBI" id="CHEBI:58349"/>
    </ligand>
</feature>
<feature type="binding site" evidence="1">
    <location>
        <begin position="452"/>
        <end position="455"/>
    </location>
    <ligand>
        <name>FAD</name>
        <dbReference type="ChEBI" id="CHEBI:57692"/>
    </ligand>
</feature>
<feature type="binding site" evidence="1">
    <location>
        <begin position="488"/>
        <end position="491"/>
    </location>
    <ligand>
        <name>FAD</name>
        <dbReference type="ChEBI" id="CHEBI:57692"/>
    </ligand>
</feature>
<feature type="binding site" evidence="1">
    <location>
        <begin position="611"/>
        <end position="612"/>
    </location>
    <ligand>
        <name>NADP(+)</name>
        <dbReference type="ChEBI" id="CHEBI:58349"/>
    </ligand>
</feature>
<feature type="binding site" evidence="1">
    <location>
        <begin position="626"/>
        <end position="628"/>
    </location>
    <ligand>
        <name>NADP(+)</name>
        <dbReference type="ChEBI" id="CHEBI:58349"/>
    </ligand>
</feature>
<feature type="binding site" evidence="1">
    <location>
        <position position="661"/>
    </location>
    <ligand>
        <name>NADP(+)</name>
        <dbReference type="ChEBI" id="CHEBI:58349"/>
    </ligand>
</feature>
<feature type="binding site" evidence="1">
    <location>
        <position position="699"/>
    </location>
    <ligand>
        <name>FAD</name>
        <dbReference type="ChEBI" id="CHEBI:57692"/>
    </ligand>
</feature>
<feature type="modified residue" description="Phosphoserine" evidence="3">
    <location>
        <position position="173"/>
    </location>
</feature>
<feature type="modified residue" description="Phosphoserine" evidence="3">
    <location>
        <position position="190"/>
    </location>
</feature>
<feature type="splice variant" id="VSP_041294" description="In isoform 2." evidence="6">
    <location>
        <begin position="44"/>
        <end position="237"/>
    </location>
</feature>
<proteinExistence type="evidence at transcript level"/>